<comment type="function">
    <text evidence="1">Molecular chaperone. Has ATPase activity.</text>
</comment>
<comment type="subunit">
    <text evidence="1">Homodimer.</text>
</comment>
<comment type="subcellular location">
    <subcellularLocation>
        <location evidence="1">Cytoplasm</location>
    </subcellularLocation>
</comment>
<comment type="similarity">
    <text evidence="1">Belongs to the heat shock protein 90 family.</text>
</comment>
<organism>
    <name type="scientific">Desulfotalea psychrophila (strain LSv54 / DSM 12343)</name>
    <dbReference type="NCBI Taxonomy" id="177439"/>
    <lineage>
        <taxon>Bacteria</taxon>
        <taxon>Pseudomonadati</taxon>
        <taxon>Thermodesulfobacteriota</taxon>
        <taxon>Desulfobulbia</taxon>
        <taxon>Desulfobulbales</taxon>
        <taxon>Desulfocapsaceae</taxon>
        <taxon>Desulfotalea</taxon>
    </lineage>
</organism>
<feature type="chain" id="PRO_0000236990" description="Chaperone protein HtpG">
    <location>
        <begin position="1"/>
        <end position="622"/>
    </location>
</feature>
<feature type="region of interest" description="A; substrate-binding" evidence="1">
    <location>
        <begin position="1"/>
        <end position="322"/>
    </location>
</feature>
<feature type="region of interest" description="B" evidence="1">
    <location>
        <begin position="323"/>
        <end position="539"/>
    </location>
</feature>
<feature type="region of interest" description="C" evidence="1">
    <location>
        <begin position="540"/>
        <end position="622"/>
    </location>
</feature>
<keyword id="KW-0067">ATP-binding</keyword>
<keyword id="KW-0143">Chaperone</keyword>
<keyword id="KW-0963">Cytoplasm</keyword>
<keyword id="KW-0547">Nucleotide-binding</keyword>
<keyword id="KW-1185">Reference proteome</keyword>
<keyword id="KW-0346">Stress response</keyword>
<name>HTPG_DESPS</name>
<gene>
    <name evidence="1" type="primary">htpG</name>
    <name type="ordered locus">DP0276</name>
</gene>
<reference key="1">
    <citation type="journal article" date="2004" name="Environ. Microbiol.">
        <title>The genome of Desulfotalea psychrophila, a sulfate-reducing bacterium from permanently cold Arctic sediments.</title>
        <authorList>
            <person name="Rabus R."/>
            <person name="Ruepp A."/>
            <person name="Frickey T."/>
            <person name="Rattei T."/>
            <person name="Fartmann B."/>
            <person name="Stark M."/>
            <person name="Bauer M."/>
            <person name="Zibat A."/>
            <person name="Lombardot T."/>
            <person name="Becker I."/>
            <person name="Amann J."/>
            <person name="Gellner K."/>
            <person name="Teeling H."/>
            <person name="Leuschner W.D."/>
            <person name="Gloeckner F.-O."/>
            <person name="Lupas A.N."/>
            <person name="Amann R."/>
            <person name="Klenk H.-P."/>
        </authorList>
    </citation>
    <scope>NUCLEOTIDE SEQUENCE [LARGE SCALE GENOMIC DNA]</scope>
    <source>
        <strain>DSM 12343 / LSv54</strain>
    </source>
</reference>
<evidence type="ECO:0000255" key="1">
    <source>
        <dbReference type="HAMAP-Rule" id="MF_00505"/>
    </source>
</evidence>
<protein>
    <recommendedName>
        <fullName evidence="1">Chaperone protein HtpG</fullName>
    </recommendedName>
    <alternativeName>
        <fullName evidence="1">Heat shock protein HtpG</fullName>
    </alternativeName>
    <alternativeName>
        <fullName evidence="1">High temperature protein G</fullName>
    </alternativeName>
</protein>
<proteinExistence type="inferred from homology"/>
<sequence>MTEAKNYEFQAETKKLLDIVINSLYTERDVFVRELISNSADALEKMRHEALTCQEVLDEDLPLEITIDLDEEAHTLTISDSGIGMTEQELVNNLGVIAHSGSGSFYAELAEAVKKDVNLIGQFGVGFYAAFMAGNKVRVQTRSWDGSQGHEWLSEGAGSFTITPLDGLARGTRIVVELKDDAHEYAQDWKIKNVIEQYSSFVSFPIKLKGEVVNTVQALWSRSKSEISDEEYNEFYKFIGNATEDPSYRLHFSADAPLSIKSLLFVPKENFEVMGFGRVEPGVNLYCQRILIDQHSENILPGWLRFLKGVVDSEDLPLNISRQSLQDNALVSKIRRVVTKRFLKYLAEEATRDESQYLQFWSTFGIYLKEGVTTDYEYQKELGKLLRFETSKSELGVPVSLADYLLRMNPDQEKIYYINGASRAAIEAGPYVEMFKKKDIEIVYTLDPIDDFVLSHLQEFEGKKLVSADGADISLDKEEAEDALVDESGVDKAELAELLTWMKEELKDEVGDVLSSHRLVDAPAMIVNADGFMSASMERVLAASRKEQGIAGVDGSKKHLEINGKNPLIKQLAELRKADAGFAGEVAHQILDNAMIQAGLVVDPLKMVARNYKILDRAVSRA</sequence>
<dbReference type="EMBL" id="CR522870">
    <property type="protein sequence ID" value="CAG35005.1"/>
    <property type="molecule type" value="Genomic_DNA"/>
</dbReference>
<dbReference type="RefSeq" id="WP_011187521.1">
    <property type="nucleotide sequence ID" value="NC_006138.1"/>
</dbReference>
<dbReference type="SMR" id="Q6ARM0"/>
<dbReference type="STRING" id="177439.DP0276"/>
<dbReference type="KEGG" id="dps:DP0276"/>
<dbReference type="eggNOG" id="COG0326">
    <property type="taxonomic scope" value="Bacteria"/>
</dbReference>
<dbReference type="HOGENOM" id="CLU_006684_3_1_7"/>
<dbReference type="OrthoDB" id="9802640at2"/>
<dbReference type="Proteomes" id="UP000000602">
    <property type="component" value="Chromosome"/>
</dbReference>
<dbReference type="GO" id="GO:0005737">
    <property type="term" value="C:cytoplasm"/>
    <property type="evidence" value="ECO:0007669"/>
    <property type="project" value="UniProtKB-SubCell"/>
</dbReference>
<dbReference type="GO" id="GO:0005524">
    <property type="term" value="F:ATP binding"/>
    <property type="evidence" value="ECO:0007669"/>
    <property type="project" value="UniProtKB-UniRule"/>
</dbReference>
<dbReference type="GO" id="GO:0016887">
    <property type="term" value="F:ATP hydrolysis activity"/>
    <property type="evidence" value="ECO:0007669"/>
    <property type="project" value="InterPro"/>
</dbReference>
<dbReference type="GO" id="GO:0140662">
    <property type="term" value="F:ATP-dependent protein folding chaperone"/>
    <property type="evidence" value="ECO:0007669"/>
    <property type="project" value="InterPro"/>
</dbReference>
<dbReference type="GO" id="GO:0051082">
    <property type="term" value="F:unfolded protein binding"/>
    <property type="evidence" value="ECO:0007669"/>
    <property type="project" value="UniProtKB-UniRule"/>
</dbReference>
<dbReference type="CDD" id="cd16927">
    <property type="entry name" value="HATPase_Hsp90-like"/>
    <property type="match status" value="1"/>
</dbReference>
<dbReference type="FunFam" id="3.30.230.80:FF:000004">
    <property type="entry name" value="Heat shock protein 75 kDa"/>
    <property type="match status" value="1"/>
</dbReference>
<dbReference type="FunFam" id="3.30.565.10:FF:000009">
    <property type="entry name" value="Molecular chaperone HtpG"/>
    <property type="match status" value="1"/>
</dbReference>
<dbReference type="Gene3D" id="3.30.230.80">
    <property type="match status" value="1"/>
</dbReference>
<dbReference type="Gene3D" id="3.40.50.11260">
    <property type="match status" value="1"/>
</dbReference>
<dbReference type="Gene3D" id="1.20.120.790">
    <property type="entry name" value="Heat shock protein 90, C-terminal domain"/>
    <property type="match status" value="1"/>
</dbReference>
<dbReference type="Gene3D" id="3.30.565.10">
    <property type="entry name" value="Histidine kinase-like ATPase, C-terminal domain"/>
    <property type="match status" value="1"/>
</dbReference>
<dbReference type="HAMAP" id="MF_00505">
    <property type="entry name" value="HSP90"/>
    <property type="match status" value="1"/>
</dbReference>
<dbReference type="InterPro" id="IPR036890">
    <property type="entry name" value="HATPase_C_sf"/>
</dbReference>
<dbReference type="InterPro" id="IPR037196">
    <property type="entry name" value="HSP90_C"/>
</dbReference>
<dbReference type="InterPro" id="IPR001404">
    <property type="entry name" value="Hsp90_fam"/>
</dbReference>
<dbReference type="InterPro" id="IPR020575">
    <property type="entry name" value="Hsp90_N"/>
</dbReference>
<dbReference type="InterPro" id="IPR020568">
    <property type="entry name" value="Ribosomal_Su5_D2-typ_SF"/>
</dbReference>
<dbReference type="NCBIfam" id="NF003555">
    <property type="entry name" value="PRK05218.1"/>
    <property type="match status" value="1"/>
</dbReference>
<dbReference type="PANTHER" id="PTHR11528">
    <property type="entry name" value="HEAT SHOCK PROTEIN 90 FAMILY MEMBER"/>
    <property type="match status" value="1"/>
</dbReference>
<dbReference type="Pfam" id="PF13589">
    <property type="entry name" value="HATPase_c_3"/>
    <property type="match status" value="1"/>
</dbReference>
<dbReference type="Pfam" id="PF00183">
    <property type="entry name" value="HSP90"/>
    <property type="match status" value="1"/>
</dbReference>
<dbReference type="PIRSF" id="PIRSF002583">
    <property type="entry name" value="Hsp90"/>
    <property type="match status" value="1"/>
</dbReference>
<dbReference type="PRINTS" id="PR00775">
    <property type="entry name" value="HEATSHOCK90"/>
</dbReference>
<dbReference type="SUPFAM" id="SSF55874">
    <property type="entry name" value="ATPase domain of HSP90 chaperone/DNA topoisomerase II/histidine kinase"/>
    <property type="match status" value="1"/>
</dbReference>
<dbReference type="SUPFAM" id="SSF110942">
    <property type="entry name" value="HSP90 C-terminal domain"/>
    <property type="match status" value="1"/>
</dbReference>
<dbReference type="SUPFAM" id="SSF54211">
    <property type="entry name" value="Ribosomal protein S5 domain 2-like"/>
    <property type="match status" value="1"/>
</dbReference>
<accession>Q6ARM0</accession>